<dbReference type="EMBL" id="U83136">
    <property type="protein sequence ID" value="AAB61904.1"/>
    <property type="molecule type" value="Genomic_DNA"/>
</dbReference>
<dbReference type="EMBL" id="CP000143">
    <property type="protein sequence ID" value="ABA77946.1"/>
    <property type="molecule type" value="Genomic_DNA"/>
</dbReference>
<dbReference type="RefSeq" id="WP_002722650.1">
    <property type="nucleotide sequence ID" value="NZ_CP030271.1"/>
</dbReference>
<dbReference type="RefSeq" id="YP_351847.1">
    <property type="nucleotide sequence ID" value="NC_007493.2"/>
</dbReference>
<dbReference type="SMR" id="O33568"/>
<dbReference type="STRING" id="272943.RSP_1799"/>
<dbReference type="EnsemblBacteria" id="ABA77946">
    <property type="protein sequence ID" value="ABA77946"/>
    <property type="gene ID" value="RSP_1799"/>
</dbReference>
<dbReference type="GeneID" id="3719044"/>
<dbReference type="KEGG" id="rsp:RSP_1799"/>
<dbReference type="PATRIC" id="fig|272943.9.peg.680"/>
<dbReference type="eggNOG" id="COG0341">
    <property type="taxonomic scope" value="Bacteria"/>
</dbReference>
<dbReference type="OrthoDB" id="9774769at2"/>
<dbReference type="PhylomeDB" id="O33568"/>
<dbReference type="Proteomes" id="UP000002703">
    <property type="component" value="Chromosome 1"/>
</dbReference>
<dbReference type="GO" id="GO:0005886">
    <property type="term" value="C:plasma membrane"/>
    <property type="evidence" value="ECO:0007669"/>
    <property type="project" value="UniProtKB-SubCell"/>
</dbReference>
<dbReference type="GO" id="GO:0015450">
    <property type="term" value="F:protein-transporting ATPase activity"/>
    <property type="evidence" value="ECO:0007669"/>
    <property type="project" value="InterPro"/>
</dbReference>
<dbReference type="GO" id="GO:0065002">
    <property type="term" value="P:intracellular protein transmembrane transport"/>
    <property type="evidence" value="ECO:0007669"/>
    <property type="project" value="UniProtKB-UniRule"/>
</dbReference>
<dbReference type="GO" id="GO:0006605">
    <property type="term" value="P:protein targeting"/>
    <property type="evidence" value="ECO:0007669"/>
    <property type="project" value="UniProtKB-UniRule"/>
</dbReference>
<dbReference type="GO" id="GO:0043952">
    <property type="term" value="P:protein transport by the Sec complex"/>
    <property type="evidence" value="ECO:0007669"/>
    <property type="project" value="UniProtKB-UniRule"/>
</dbReference>
<dbReference type="FunFam" id="1.20.1640.10:FF:000024">
    <property type="entry name" value="Multifunctional fusion protein"/>
    <property type="match status" value="1"/>
</dbReference>
<dbReference type="Gene3D" id="1.20.1640.10">
    <property type="entry name" value="Multidrug efflux transporter AcrB transmembrane domain"/>
    <property type="match status" value="1"/>
</dbReference>
<dbReference type="HAMAP" id="MF_01464_B">
    <property type="entry name" value="SecF_B"/>
    <property type="match status" value="1"/>
</dbReference>
<dbReference type="InterPro" id="IPR022813">
    <property type="entry name" value="SecD/SecF_arch_bac"/>
</dbReference>
<dbReference type="InterPro" id="IPR022645">
    <property type="entry name" value="SecD/SecF_bac"/>
</dbReference>
<dbReference type="InterPro" id="IPR022646">
    <property type="entry name" value="SecD/SecF_CS"/>
</dbReference>
<dbReference type="InterPro" id="IPR048634">
    <property type="entry name" value="SecD_SecF_C"/>
</dbReference>
<dbReference type="InterPro" id="IPR055344">
    <property type="entry name" value="SecD_SecF_C_bact"/>
</dbReference>
<dbReference type="InterPro" id="IPR005665">
    <property type="entry name" value="SecF_bac"/>
</dbReference>
<dbReference type="NCBIfam" id="TIGR00916">
    <property type="entry name" value="2A0604s01"/>
    <property type="match status" value="1"/>
</dbReference>
<dbReference type="NCBIfam" id="TIGR00966">
    <property type="entry name" value="transloc_SecF"/>
    <property type="match status" value="1"/>
</dbReference>
<dbReference type="PANTHER" id="PTHR30081:SF8">
    <property type="entry name" value="PROTEIN TRANSLOCASE SUBUNIT SECF"/>
    <property type="match status" value="1"/>
</dbReference>
<dbReference type="PANTHER" id="PTHR30081">
    <property type="entry name" value="PROTEIN-EXPORT MEMBRANE PROTEIN SEC"/>
    <property type="match status" value="1"/>
</dbReference>
<dbReference type="Pfam" id="PF07549">
    <property type="entry name" value="Sec_GG"/>
    <property type="match status" value="1"/>
</dbReference>
<dbReference type="Pfam" id="PF02355">
    <property type="entry name" value="SecD_SecF_C"/>
    <property type="match status" value="1"/>
</dbReference>
<dbReference type="PRINTS" id="PR01755">
    <property type="entry name" value="SECFTRNLCASE"/>
</dbReference>
<dbReference type="SUPFAM" id="SSF82866">
    <property type="entry name" value="Multidrug efflux transporter AcrB transmembrane domain"/>
    <property type="match status" value="1"/>
</dbReference>
<organism>
    <name type="scientific">Cereibacter sphaeroides (strain ATCC 17023 / DSM 158 / JCM 6121 / CCUG 31486 / LMG 2827 / NBRC 12203 / NCIMB 8253 / ATH 2.4.1.)</name>
    <name type="common">Rhodobacter sphaeroides</name>
    <dbReference type="NCBI Taxonomy" id="272943"/>
    <lineage>
        <taxon>Bacteria</taxon>
        <taxon>Pseudomonadati</taxon>
        <taxon>Pseudomonadota</taxon>
        <taxon>Alphaproteobacteria</taxon>
        <taxon>Rhodobacterales</taxon>
        <taxon>Paracoccaceae</taxon>
        <taxon>Cereibacter</taxon>
    </lineage>
</organism>
<proteinExistence type="inferred from homology"/>
<accession>O33568</accession>
<accession>Q3J5I8</accession>
<evidence type="ECO:0000255" key="1">
    <source>
        <dbReference type="HAMAP-Rule" id="MF_01464"/>
    </source>
</evidence>
<name>SECF_CERS4</name>
<feature type="chain" id="PRO_0000095985" description="Protein translocase subunit SecF">
    <location>
        <begin position="1"/>
        <end position="324"/>
    </location>
</feature>
<feature type="transmembrane region" description="Helical" evidence="1">
    <location>
        <begin position="16"/>
        <end position="36"/>
    </location>
</feature>
<feature type="transmembrane region" description="Helical" evidence="1">
    <location>
        <begin position="145"/>
        <end position="165"/>
    </location>
</feature>
<feature type="transmembrane region" description="Helical" evidence="1">
    <location>
        <begin position="174"/>
        <end position="194"/>
    </location>
</feature>
<feature type="transmembrane region" description="Helical" evidence="1">
    <location>
        <begin position="201"/>
        <end position="221"/>
    </location>
</feature>
<feature type="transmembrane region" description="Helical" evidence="1">
    <location>
        <begin position="247"/>
        <end position="269"/>
    </location>
</feature>
<feature type="transmembrane region" description="Helical" evidence="1">
    <location>
        <begin position="276"/>
        <end position="295"/>
    </location>
</feature>
<gene>
    <name evidence="1" type="primary">secF</name>
    <name type="ordered locus">RHOS4_03780</name>
    <name type="ORF">RSP_1799</name>
</gene>
<comment type="function">
    <text evidence="1">Part of the Sec protein translocase complex. Interacts with the SecYEG preprotein conducting channel. SecDF uses the proton motive force (PMF) to complete protein translocation after the ATP-dependent function of SecA.</text>
</comment>
<comment type="subunit">
    <text evidence="1">Forms a complex with SecD. Part of the essential Sec protein translocation apparatus which comprises SecA, SecYEG and auxiliary proteins SecDF-YajC and YidC.</text>
</comment>
<comment type="subcellular location">
    <subcellularLocation>
        <location evidence="1">Cell inner membrane</location>
        <topology evidence="1">Multi-pass membrane protein</topology>
    </subcellularLocation>
</comment>
<comment type="similarity">
    <text evidence="1">Belongs to the SecD/SecF family. SecF subfamily.</text>
</comment>
<protein>
    <recommendedName>
        <fullName>Protein translocase subunit SecF</fullName>
    </recommendedName>
</protein>
<reference key="1">
    <citation type="submission" date="1996-12" db="EMBL/GenBank/DDBJ databases">
        <title>Identification and characterization of putative cytochrome c maturation genes (ccmABCDG) from Rhodobacter sphaeroides.</title>
        <authorList>
            <person name="Patterson C.S."/>
            <person name="Donohue T.J."/>
        </authorList>
    </citation>
    <scope>NUCLEOTIDE SEQUENCE [GENOMIC DNA]</scope>
</reference>
<reference key="2">
    <citation type="submission" date="2005-09" db="EMBL/GenBank/DDBJ databases">
        <title>Complete sequence of chromosome 1 of Rhodobacter sphaeroides 2.4.1.</title>
        <authorList>
            <person name="Copeland A."/>
            <person name="Lucas S."/>
            <person name="Lapidus A."/>
            <person name="Barry K."/>
            <person name="Detter J.C."/>
            <person name="Glavina T."/>
            <person name="Hammon N."/>
            <person name="Israni S."/>
            <person name="Pitluck S."/>
            <person name="Richardson P."/>
            <person name="Mackenzie C."/>
            <person name="Choudhary M."/>
            <person name="Larimer F."/>
            <person name="Hauser L.J."/>
            <person name="Land M."/>
            <person name="Donohue T.J."/>
            <person name="Kaplan S."/>
        </authorList>
    </citation>
    <scope>NUCLEOTIDE SEQUENCE [LARGE SCALE GENOMIC DNA]</scope>
    <source>
        <strain>ATCC 17023 / DSM 158 / JCM 6121 / CCUG 31486 / LMG 2827 / NBRC 12203 / NCIMB 8253 / ATH 2.4.1.</strain>
    </source>
</reference>
<sequence length="324" mass="35088">MAFRLKLCPEKTNIDFFWAAPVTFGFSVFLMAASLVAWLTLGLNFGIDFRGGTTIRTESTQAVDVAAYRAALEGQDLGDISITEVFDPGFRADQHVAMVRIGAQDATQSITPEQIGQVEEALKTVDPSITFPSVESVGPKVSGELIRSAILAVAAACAGIAVYIWLRFEWQFALGSVAALIHDVLVTIGVFALFQIKFDLTTVAALLTVLGYSINDTVVVFDRLRENLVKYKTMPLRDVMNLSVNETLSRTIMTLMTTLIALVSLLVFGGDVIRGFVFAITFGVVIGTYSSVYMAKNIVLYLGVDRGGPKKDSKAGTQFANIDA</sequence>
<keyword id="KW-0997">Cell inner membrane</keyword>
<keyword id="KW-1003">Cell membrane</keyword>
<keyword id="KW-0472">Membrane</keyword>
<keyword id="KW-0653">Protein transport</keyword>
<keyword id="KW-1185">Reference proteome</keyword>
<keyword id="KW-0811">Translocation</keyword>
<keyword id="KW-0812">Transmembrane</keyword>
<keyword id="KW-1133">Transmembrane helix</keyword>
<keyword id="KW-0813">Transport</keyword>